<accession>A9M2V7</accession>
<proteinExistence type="inferred from homology"/>
<gene>
    <name evidence="1" type="primary">kdsB</name>
    <name type="ordered locus">NMCC_0629</name>
</gene>
<feature type="chain" id="PRO_0000370105" description="3-deoxy-manno-octulosonate cytidylyltransferase">
    <location>
        <begin position="1"/>
        <end position="253"/>
    </location>
</feature>
<evidence type="ECO:0000255" key="1">
    <source>
        <dbReference type="HAMAP-Rule" id="MF_00057"/>
    </source>
</evidence>
<sequence>MTEFVVLIPARLDSSRLPGKALADIHGKPMVVRVAEQAAKSKAARVVVATDHPDIQTVCQAHGIEAVMTSNRHESGTTRLAEASAALKLPPHLIVVNVQGDEPLIAPELIDRTAEVLVENNVQMATAAHELHDFDELMNPNAVKVVLDKNRNAIYFSRAPIPYLRDAMRAGKREMPSETAVLRHIGIYAYRAGFLQRYAEMSVSPLETIESLEQLRVLWHGYPIAVETAKEAPAAGVDTQEDLDRVRAVFQTV</sequence>
<comment type="function">
    <text evidence="1">Activates KDO (a required 8-carbon sugar) for incorporation into bacterial lipopolysaccharide in Gram-negative bacteria.</text>
</comment>
<comment type="catalytic activity">
    <reaction evidence="1">
        <text>3-deoxy-alpha-D-manno-oct-2-ulosonate + CTP = CMP-3-deoxy-beta-D-manno-octulosonate + diphosphate</text>
        <dbReference type="Rhea" id="RHEA:23448"/>
        <dbReference type="ChEBI" id="CHEBI:33019"/>
        <dbReference type="ChEBI" id="CHEBI:37563"/>
        <dbReference type="ChEBI" id="CHEBI:85986"/>
        <dbReference type="ChEBI" id="CHEBI:85987"/>
        <dbReference type="EC" id="2.7.7.38"/>
    </reaction>
</comment>
<comment type="pathway">
    <text evidence="1">Nucleotide-sugar biosynthesis; CMP-3-deoxy-D-manno-octulosonate biosynthesis; CMP-3-deoxy-D-manno-octulosonate from 3-deoxy-D-manno-octulosonate and CTP: step 1/1.</text>
</comment>
<comment type="pathway">
    <text evidence="1">Bacterial outer membrane biogenesis; lipopolysaccharide biosynthesis.</text>
</comment>
<comment type="subcellular location">
    <subcellularLocation>
        <location evidence="1">Cytoplasm</location>
    </subcellularLocation>
</comment>
<comment type="similarity">
    <text evidence="1">Belongs to the KdsB family.</text>
</comment>
<keyword id="KW-0963">Cytoplasm</keyword>
<keyword id="KW-0448">Lipopolysaccharide biosynthesis</keyword>
<keyword id="KW-0548">Nucleotidyltransferase</keyword>
<keyword id="KW-0808">Transferase</keyword>
<dbReference type="EC" id="2.7.7.38" evidence="1"/>
<dbReference type="EMBL" id="CP000381">
    <property type="protein sequence ID" value="ABX72826.1"/>
    <property type="molecule type" value="Genomic_DNA"/>
</dbReference>
<dbReference type="RefSeq" id="WP_012221412.1">
    <property type="nucleotide sequence ID" value="NC_010120.1"/>
</dbReference>
<dbReference type="SMR" id="A9M2V7"/>
<dbReference type="KEGG" id="nmn:NMCC_0629"/>
<dbReference type="HOGENOM" id="CLU_065038_1_0_4"/>
<dbReference type="UniPathway" id="UPA00030"/>
<dbReference type="UniPathway" id="UPA00358">
    <property type="reaction ID" value="UER00476"/>
</dbReference>
<dbReference type="Proteomes" id="UP000001177">
    <property type="component" value="Chromosome"/>
</dbReference>
<dbReference type="GO" id="GO:0005829">
    <property type="term" value="C:cytosol"/>
    <property type="evidence" value="ECO:0007669"/>
    <property type="project" value="TreeGrafter"/>
</dbReference>
<dbReference type="GO" id="GO:0008690">
    <property type="term" value="F:3-deoxy-manno-octulosonate cytidylyltransferase activity"/>
    <property type="evidence" value="ECO:0007669"/>
    <property type="project" value="UniProtKB-UniRule"/>
</dbReference>
<dbReference type="GO" id="GO:0033468">
    <property type="term" value="P:CMP-keto-3-deoxy-D-manno-octulosonic acid biosynthetic process"/>
    <property type="evidence" value="ECO:0007669"/>
    <property type="project" value="UniProtKB-UniRule"/>
</dbReference>
<dbReference type="GO" id="GO:0009103">
    <property type="term" value="P:lipopolysaccharide biosynthetic process"/>
    <property type="evidence" value="ECO:0007669"/>
    <property type="project" value="UniProtKB-UniRule"/>
</dbReference>
<dbReference type="CDD" id="cd02517">
    <property type="entry name" value="CMP-KDO-Synthetase"/>
    <property type="match status" value="1"/>
</dbReference>
<dbReference type="FunFam" id="3.90.550.10:FF:000011">
    <property type="entry name" value="3-deoxy-manno-octulosonate cytidylyltransferase"/>
    <property type="match status" value="1"/>
</dbReference>
<dbReference type="Gene3D" id="3.90.550.10">
    <property type="entry name" value="Spore Coat Polysaccharide Biosynthesis Protein SpsA, Chain A"/>
    <property type="match status" value="1"/>
</dbReference>
<dbReference type="HAMAP" id="MF_00057">
    <property type="entry name" value="KdsB"/>
    <property type="match status" value="1"/>
</dbReference>
<dbReference type="InterPro" id="IPR003329">
    <property type="entry name" value="Cytidylyl_trans"/>
</dbReference>
<dbReference type="InterPro" id="IPR004528">
    <property type="entry name" value="KdsB"/>
</dbReference>
<dbReference type="InterPro" id="IPR029044">
    <property type="entry name" value="Nucleotide-diphossugar_trans"/>
</dbReference>
<dbReference type="NCBIfam" id="TIGR00466">
    <property type="entry name" value="kdsB"/>
    <property type="match status" value="1"/>
</dbReference>
<dbReference type="NCBIfam" id="NF003952">
    <property type="entry name" value="PRK05450.1-5"/>
    <property type="match status" value="1"/>
</dbReference>
<dbReference type="NCBIfam" id="NF009905">
    <property type="entry name" value="PRK13368.1"/>
    <property type="match status" value="1"/>
</dbReference>
<dbReference type="PANTHER" id="PTHR42866">
    <property type="entry name" value="3-DEOXY-MANNO-OCTULOSONATE CYTIDYLYLTRANSFERASE"/>
    <property type="match status" value="1"/>
</dbReference>
<dbReference type="PANTHER" id="PTHR42866:SF2">
    <property type="entry name" value="3-DEOXY-MANNO-OCTULOSONATE CYTIDYLYLTRANSFERASE, MITOCHONDRIAL"/>
    <property type="match status" value="1"/>
</dbReference>
<dbReference type="Pfam" id="PF02348">
    <property type="entry name" value="CTP_transf_3"/>
    <property type="match status" value="1"/>
</dbReference>
<dbReference type="SUPFAM" id="SSF53448">
    <property type="entry name" value="Nucleotide-diphospho-sugar transferases"/>
    <property type="match status" value="1"/>
</dbReference>
<name>KDSB_NEIM0</name>
<protein>
    <recommendedName>
        <fullName evidence="1">3-deoxy-manno-octulosonate cytidylyltransferase</fullName>
        <ecNumber evidence="1">2.7.7.38</ecNumber>
    </recommendedName>
    <alternativeName>
        <fullName evidence="1">CMP-2-keto-3-deoxyoctulosonic acid synthase</fullName>
        <shortName evidence="1">CKS</shortName>
        <shortName evidence="1">CMP-KDO synthase</shortName>
    </alternativeName>
</protein>
<organism>
    <name type="scientific">Neisseria meningitidis serogroup C (strain 053442)</name>
    <dbReference type="NCBI Taxonomy" id="374833"/>
    <lineage>
        <taxon>Bacteria</taxon>
        <taxon>Pseudomonadati</taxon>
        <taxon>Pseudomonadota</taxon>
        <taxon>Betaproteobacteria</taxon>
        <taxon>Neisseriales</taxon>
        <taxon>Neisseriaceae</taxon>
        <taxon>Neisseria</taxon>
    </lineage>
</organism>
<reference key="1">
    <citation type="journal article" date="2008" name="Genomics">
        <title>Characterization of ST-4821 complex, a unique Neisseria meningitidis clone.</title>
        <authorList>
            <person name="Peng J."/>
            <person name="Yang L."/>
            <person name="Yang F."/>
            <person name="Yang J."/>
            <person name="Yan Y."/>
            <person name="Nie H."/>
            <person name="Zhang X."/>
            <person name="Xiong Z."/>
            <person name="Jiang Y."/>
            <person name="Cheng F."/>
            <person name="Xu X."/>
            <person name="Chen S."/>
            <person name="Sun L."/>
            <person name="Li W."/>
            <person name="Shen Y."/>
            <person name="Shao Z."/>
            <person name="Liang X."/>
            <person name="Xu J."/>
            <person name="Jin Q."/>
        </authorList>
    </citation>
    <scope>NUCLEOTIDE SEQUENCE [LARGE SCALE GENOMIC DNA]</scope>
    <source>
        <strain>053442</strain>
    </source>
</reference>